<accession>A1CIF1</accession>
<feature type="chain" id="PRO_0000370584" description="tRNA (guanine-N(7)-)-methyltransferase">
    <location>
        <begin position="1"/>
        <end position="339"/>
    </location>
</feature>
<feature type="region of interest" description="Disordered" evidence="2">
    <location>
        <begin position="1"/>
        <end position="20"/>
    </location>
</feature>
<feature type="region of interest" description="Disordered" evidence="2">
    <location>
        <begin position="141"/>
        <end position="186"/>
    </location>
</feature>
<feature type="compositionally biased region" description="Low complexity" evidence="2">
    <location>
        <begin position="142"/>
        <end position="181"/>
    </location>
</feature>
<feature type="active site" evidence="1">
    <location>
        <position position="225"/>
    </location>
</feature>
<feature type="binding site" evidence="1">
    <location>
        <position position="94"/>
    </location>
    <ligand>
        <name>S-adenosyl-L-methionine</name>
        <dbReference type="ChEBI" id="CHEBI:59789"/>
    </ligand>
</feature>
<feature type="binding site" evidence="1">
    <location>
        <begin position="117"/>
        <end position="118"/>
    </location>
    <ligand>
        <name>S-adenosyl-L-methionine</name>
        <dbReference type="ChEBI" id="CHEBI:59789"/>
    </ligand>
</feature>
<feature type="binding site" evidence="1">
    <location>
        <begin position="202"/>
        <end position="203"/>
    </location>
    <ligand>
        <name>S-adenosyl-L-methionine</name>
        <dbReference type="ChEBI" id="CHEBI:59789"/>
    </ligand>
</feature>
<feature type="binding site" evidence="1">
    <location>
        <position position="222"/>
    </location>
    <ligand>
        <name>S-adenosyl-L-methionine</name>
        <dbReference type="ChEBI" id="CHEBI:59789"/>
    </ligand>
</feature>
<feature type="binding site" evidence="1">
    <location>
        <begin position="311"/>
        <end position="313"/>
    </location>
    <ligand>
        <name>S-adenosyl-L-methionine</name>
        <dbReference type="ChEBI" id="CHEBI:59789"/>
    </ligand>
</feature>
<proteinExistence type="inferred from homology"/>
<keyword id="KW-0489">Methyltransferase</keyword>
<keyword id="KW-0539">Nucleus</keyword>
<keyword id="KW-1185">Reference proteome</keyword>
<keyword id="KW-0694">RNA-binding</keyword>
<keyword id="KW-0949">S-adenosyl-L-methionine</keyword>
<keyword id="KW-0808">Transferase</keyword>
<keyword id="KW-0819">tRNA processing</keyword>
<keyword id="KW-0820">tRNA-binding</keyword>
<dbReference type="EC" id="2.1.1.33" evidence="1"/>
<dbReference type="EMBL" id="DS027054">
    <property type="protein sequence ID" value="EAW10656.1"/>
    <property type="molecule type" value="Genomic_DNA"/>
</dbReference>
<dbReference type="RefSeq" id="XP_001272082.1">
    <property type="nucleotide sequence ID" value="XM_001272081.1"/>
</dbReference>
<dbReference type="SMR" id="A1CIF1"/>
<dbReference type="STRING" id="344612.A1CIF1"/>
<dbReference type="EnsemblFungi" id="EAW10656">
    <property type="protein sequence ID" value="EAW10656"/>
    <property type="gene ID" value="ACLA_051280"/>
</dbReference>
<dbReference type="GeneID" id="4703719"/>
<dbReference type="KEGG" id="act:ACLA_051280"/>
<dbReference type="VEuPathDB" id="FungiDB:ACLA_051280"/>
<dbReference type="eggNOG" id="KOG3115">
    <property type="taxonomic scope" value="Eukaryota"/>
</dbReference>
<dbReference type="HOGENOM" id="CLU_050910_3_1_1"/>
<dbReference type="OMA" id="LPNYFAK"/>
<dbReference type="OrthoDB" id="47276at2759"/>
<dbReference type="UniPathway" id="UPA00989"/>
<dbReference type="Proteomes" id="UP000006701">
    <property type="component" value="Unassembled WGS sequence"/>
</dbReference>
<dbReference type="GO" id="GO:0005634">
    <property type="term" value="C:nucleus"/>
    <property type="evidence" value="ECO:0007669"/>
    <property type="project" value="UniProtKB-SubCell"/>
</dbReference>
<dbReference type="GO" id="GO:0043527">
    <property type="term" value="C:tRNA methyltransferase complex"/>
    <property type="evidence" value="ECO:0007669"/>
    <property type="project" value="TreeGrafter"/>
</dbReference>
<dbReference type="GO" id="GO:0008176">
    <property type="term" value="F:tRNA (guanine(46)-N7)-methyltransferase activity"/>
    <property type="evidence" value="ECO:0007669"/>
    <property type="project" value="UniProtKB-UniRule"/>
</dbReference>
<dbReference type="GO" id="GO:0000049">
    <property type="term" value="F:tRNA binding"/>
    <property type="evidence" value="ECO:0007669"/>
    <property type="project" value="UniProtKB-UniRule"/>
</dbReference>
<dbReference type="Gene3D" id="3.40.50.150">
    <property type="entry name" value="Vaccinia Virus protein VP39"/>
    <property type="match status" value="1"/>
</dbReference>
<dbReference type="HAMAP" id="MF_03055">
    <property type="entry name" value="tRNA_methyltr_TrmB_euk"/>
    <property type="match status" value="1"/>
</dbReference>
<dbReference type="InterPro" id="IPR029063">
    <property type="entry name" value="SAM-dependent_MTases_sf"/>
</dbReference>
<dbReference type="InterPro" id="IPR025763">
    <property type="entry name" value="Trm8_euk"/>
</dbReference>
<dbReference type="InterPro" id="IPR003358">
    <property type="entry name" value="tRNA_(Gua-N-7)_MeTrfase_Trmb"/>
</dbReference>
<dbReference type="PANTHER" id="PTHR23417">
    <property type="entry name" value="3-DEOXY-D-MANNO-OCTULOSONIC-ACID TRANSFERASE/TRNA GUANINE-N 7 - -METHYLTRANSFERASE"/>
    <property type="match status" value="1"/>
</dbReference>
<dbReference type="PANTHER" id="PTHR23417:SF16">
    <property type="entry name" value="TRNA (GUANINE-N(7)-)-METHYLTRANSFERASE"/>
    <property type="match status" value="1"/>
</dbReference>
<dbReference type="Pfam" id="PF02390">
    <property type="entry name" value="Methyltransf_4"/>
    <property type="match status" value="2"/>
</dbReference>
<dbReference type="SUPFAM" id="SSF53335">
    <property type="entry name" value="S-adenosyl-L-methionine-dependent methyltransferases"/>
    <property type="match status" value="1"/>
</dbReference>
<dbReference type="PROSITE" id="PS51625">
    <property type="entry name" value="SAM_MT_TRMB"/>
    <property type="match status" value="1"/>
</dbReference>
<comment type="function">
    <text evidence="1">Catalyzes the formation of N(7)-methylguanine at position 46 (m7G46) in tRNA.</text>
</comment>
<comment type="catalytic activity">
    <reaction evidence="1">
        <text>guanosine(46) in tRNA + S-adenosyl-L-methionine = N(7)-methylguanosine(46) in tRNA + S-adenosyl-L-homocysteine</text>
        <dbReference type="Rhea" id="RHEA:42708"/>
        <dbReference type="Rhea" id="RHEA-COMP:10188"/>
        <dbReference type="Rhea" id="RHEA-COMP:10189"/>
        <dbReference type="ChEBI" id="CHEBI:57856"/>
        <dbReference type="ChEBI" id="CHEBI:59789"/>
        <dbReference type="ChEBI" id="CHEBI:74269"/>
        <dbReference type="ChEBI" id="CHEBI:74480"/>
        <dbReference type="EC" id="2.1.1.33"/>
    </reaction>
</comment>
<comment type="pathway">
    <text evidence="1">tRNA modification; N(7)-methylguanine-tRNA biosynthesis.</text>
</comment>
<comment type="subunit">
    <text evidence="1">Forms a complex with trm82.</text>
</comment>
<comment type="subcellular location">
    <subcellularLocation>
        <location evidence="1">Nucleus</location>
    </subcellularLocation>
</comment>
<comment type="similarity">
    <text evidence="1">Belongs to the class I-like SAM-binding methyltransferase superfamily. TrmB family.</text>
</comment>
<organism>
    <name type="scientific">Aspergillus clavatus (strain ATCC 1007 / CBS 513.65 / DSM 816 / NCTC 3887 / NRRL 1 / QM 1276 / 107)</name>
    <dbReference type="NCBI Taxonomy" id="344612"/>
    <lineage>
        <taxon>Eukaryota</taxon>
        <taxon>Fungi</taxon>
        <taxon>Dikarya</taxon>
        <taxon>Ascomycota</taxon>
        <taxon>Pezizomycotina</taxon>
        <taxon>Eurotiomycetes</taxon>
        <taxon>Eurotiomycetidae</taxon>
        <taxon>Eurotiales</taxon>
        <taxon>Aspergillaceae</taxon>
        <taxon>Aspergillus</taxon>
        <taxon>Aspergillus subgen. Fumigati</taxon>
    </lineage>
</organism>
<name>TRMB_ASPCL</name>
<evidence type="ECO:0000255" key="1">
    <source>
        <dbReference type="HAMAP-Rule" id="MF_03055"/>
    </source>
</evidence>
<evidence type="ECO:0000256" key="2">
    <source>
        <dbReference type="SAM" id="MobiDB-lite"/>
    </source>
</evidence>
<protein>
    <recommendedName>
        <fullName evidence="1">tRNA (guanine-N(7)-)-methyltransferase</fullName>
        <ecNumber evidence="1">2.1.1.33</ecNumber>
    </recommendedName>
    <alternativeName>
        <fullName evidence="1">Transfer RNA methyltransferase 8</fullName>
    </alternativeName>
    <alternativeName>
        <fullName evidence="1">tRNA (guanine(46)-N(7))-methyltransferase</fullName>
    </alternativeName>
    <alternativeName>
        <fullName evidence="1">tRNA(m7G46)-methyltransferase</fullName>
    </alternativeName>
</protein>
<reference key="1">
    <citation type="journal article" date="2008" name="PLoS Genet.">
        <title>Genomic islands in the pathogenic filamentous fungus Aspergillus fumigatus.</title>
        <authorList>
            <person name="Fedorova N.D."/>
            <person name="Khaldi N."/>
            <person name="Joardar V.S."/>
            <person name="Maiti R."/>
            <person name="Amedeo P."/>
            <person name="Anderson M.J."/>
            <person name="Crabtree J."/>
            <person name="Silva J.C."/>
            <person name="Badger J.H."/>
            <person name="Albarraq A."/>
            <person name="Angiuoli S."/>
            <person name="Bussey H."/>
            <person name="Bowyer P."/>
            <person name="Cotty P.J."/>
            <person name="Dyer P.S."/>
            <person name="Egan A."/>
            <person name="Galens K."/>
            <person name="Fraser-Liggett C.M."/>
            <person name="Haas B.J."/>
            <person name="Inman J.M."/>
            <person name="Kent R."/>
            <person name="Lemieux S."/>
            <person name="Malavazi I."/>
            <person name="Orvis J."/>
            <person name="Roemer T."/>
            <person name="Ronning C.M."/>
            <person name="Sundaram J.P."/>
            <person name="Sutton G."/>
            <person name="Turner G."/>
            <person name="Venter J.C."/>
            <person name="White O.R."/>
            <person name="Whitty B.R."/>
            <person name="Youngman P."/>
            <person name="Wolfe K.H."/>
            <person name="Goldman G.H."/>
            <person name="Wortman J.R."/>
            <person name="Jiang B."/>
            <person name="Denning D.W."/>
            <person name="Nierman W.C."/>
        </authorList>
    </citation>
    <scope>NUCLEOTIDE SEQUENCE [LARGE SCALE GENOMIC DNA]</scope>
    <source>
        <strain>ATCC 1007 / CBS 513.65 / DSM 816 / NCTC 3887 / NRRL 1 / QM 1276 / 107</strain>
    </source>
</reference>
<gene>
    <name type="primary">trm8</name>
    <name type="ORF">ACLA_051280</name>
</gene>
<sequence>MTPPPAKRQKRNEYRKANTAVADDASEIRLPQKKFYRQRAHANPFSDHQLNYPLSPAHMDWSSHYPAFVDPEPSHTNLAGTRKLLKDVEVVDIGCGFGGLLIGLAPLLPESLIVGMEIRVSVLEYVTARIQALRSQQQKLRSSAIPSESSPAAQQPQQHHQQQLQATETAADAASPSSPDATGETLSLVPGNYQNISAIRSNTMKFFPNFFARHQLSKIFICFPDPHFKARKHKARIISETLNAEYAYALRPGGLLYTITDVEEYHHWVLRHFGEEGADAGQNAGVTELFERVSDEELEKDDCVRVMKEATEEGKKVTRNKGNKYVAVFRRKADPEWPA</sequence>